<dbReference type="EMBL" id="AY032883">
    <property type="protein sequence ID" value="AAK52335.1"/>
    <property type="molecule type" value="mRNA"/>
</dbReference>
<dbReference type="EMBL" id="AC025171">
    <property type="status" value="NOT_ANNOTATED_CDS"/>
    <property type="molecule type" value="Genomic_DNA"/>
</dbReference>
<dbReference type="EMBL" id="BC067873">
    <property type="protein sequence ID" value="AAH67873.1"/>
    <property type="molecule type" value="mRNA"/>
</dbReference>
<dbReference type="CCDS" id="CCDS34153.1"/>
<dbReference type="RefSeq" id="NP_001014301.1">
    <property type="nucleotide sequence ID" value="NM_001014279.3"/>
</dbReference>
<dbReference type="RefSeq" id="NP_001369281.1">
    <property type="nucleotide sequence ID" value="NM_001382352.1"/>
</dbReference>
<dbReference type="BioGRID" id="133074">
    <property type="interactions" value="8"/>
</dbReference>
<dbReference type="FunCoup" id="Q3ZCQ2">
    <property type="interactions" value="6"/>
</dbReference>
<dbReference type="IntAct" id="Q3ZCQ2">
    <property type="interactions" value="6"/>
</dbReference>
<dbReference type="STRING" id="9606.ENSP00000315915"/>
<dbReference type="GlyGen" id="Q3ZCQ2">
    <property type="glycosylation" value="1 site, 1 O-linked glycan (1 site)"/>
</dbReference>
<dbReference type="iPTMnet" id="Q3ZCQ2"/>
<dbReference type="PhosphoSitePlus" id="Q3ZCQ2"/>
<dbReference type="BioMuta" id="ANXA2R"/>
<dbReference type="MassIVE" id="Q3ZCQ2"/>
<dbReference type="PaxDb" id="9606-ENSP00000315915"/>
<dbReference type="PeptideAtlas" id="Q3ZCQ2"/>
<dbReference type="ProteomicsDB" id="61907"/>
<dbReference type="Antibodypedia" id="23232">
    <property type="antibodies" value="82 antibodies from 22 providers"/>
</dbReference>
<dbReference type="DNASU" id="389289"/>
<dbReference type="Ensembl" id="ENST00000314890.3">
    <property type="protein sequence ID" value="ENSP00000315915.3"/>
    <property type="gene ID" value="ENSG00000177721.5"/>
</dbReference>
<dbReference type="Ensembl" id="ENST00000616064.2">
    <property type="protein sequence ID" value="ENSP00000479862.1"/>
    <property type="gene ID" value="ENSG00000177721.5"/>
</dbReference>
<dbReference type="GeneID" id="389289"/>
<dbReference type="KEGG" id="hsa:389289"/>
<dbReference type="MANE-Select" id="ENST00000616064.2">
    <property type="protein sequence ID" value="ENSP00000479862.1"/>
    <property type="RefSeq nucleotide sequence ID" value="NM_001014279.3"/>
    <property type="RefSeq protein sequence ID" value="NP_001014301.1"/>
</dbReference>
<dbReference type="UCSC" id="uc003jnf.4">
    <property type="organism name" value="human"/>
</dbReference>
<dbReference type="AGR" id="HGNC:33463"/>
<dbReference type="CTD" id="389289"/>
<dbReference type="DisGeNET" id="389289"/>
<dbReference type="GeneCards" id="ANXA2R"/>
<dbReference type="HGNC" id="HGNC:33463">
    <property type="gene designation" value="ANXA2R"/>
</dbReference>
<dbReference type="HPA" id="ENSG00000177721">
    <property type="expression patterns" value="Tissue enhanced (bone marrow, lymphoid tissue)"/>
</dbReference>
<dbReference type="MIM" id="611296">
    <property type="type" value="gene"/>
</dbReference>
<dbReference type="neXtProt" id="NX_Q3ZCQ2"/>
<dbReference type="OpenTargets" id="ENSG00000177721"/>
<dbReference type="PharmGKB" id="PA162380171"/>
<dbReference type="VEuPathDB" id="HostDB:ENSG00000177721"/>
<dbReference type="eggNOG" id="ENOG502TEGY">
    <property type="taxonomic scope" value="Eukaryota"/>
</dbReference>
<dbReference type="GeneTree" id="ENSGT00390000009290"/>
<dbReference type="HOGENOM" id="CLU_1408354_0_0_1"/>
<dbReference type="InParanoid" id="Q3ZCQ2"/>
<dbReference type="OMA" id="FEWIGRT"/>
<dbReference type="OrthoDB" id="9528816at2759"/>
<dbReference type="PAN-GO" id="Q3ZCQ2">
    <property type="GO annotations" value="0 GO annotations based on evolutionary models"/>
</dbReference>
<dbReference type="PhylomeDB" id="Q3ZCQ2"/>
<dbReference type="TreeFam" id="TF342039"/>
<dbReference type="PathwayCommons" id="Q3ZCQ2"/>
<dbReference type="SignaLink" id="Q3ZCQ2"/>
<dbReference type="BioGRID-ORCS" id="389289">
    <property type="hits" value="17 hits in 1164 CRISPR screens"/>
</dbReference>
<dbReference type="GenomeRNAi" id="389289"/>
<dbReference type="Pharos" id="Q3ZCQ2">
    <property type="development level" value="Tbio"/>
</dbReference>
<dbReference type="PRO" id="PR:Q3ZCQ2"/>
<dbReference type="Proteomes" id="UP000005640">
    <property type="component" value="Chromosome 5"/>
</dbReference>
<dbReference type="RNAct" id="Q3ZCQ2">
    <property type="molecule type" value="protein"/>
</dbReference>
<dbReference type="Bgee" id="ENSG00000177721">
    <property type="expression patterns" value="Expressed in granulocyte and 106 other cell types or tissues"/>
</dbReference>
<dbReference type="GO" id="GO:0038023">
    <property type="term" value="F:signaling receptor activity"/>
    <property type="evidence" value="ECO:0007669"/>
    <property type="project" value="InterPro"/>
</dbReference>
<dbReference type="InterPro" id="IPR031449">
    <property type="entry name" value="ANXA2R"/>
</dbReference>
<dbReference type="PANTHER" id="PTHR38820">
    <property type="entry name" value="ANNEXIN-2 RECEPTOR"/>
    <property type="match status" value="1"/>
</dbReference>
<dbReference type="PANTHER" id="PTHR38820:SF1">
    <property type="entry name" value="ANNEXIN-2 RECEPTOR"/>
    <property type="match status" value="1"/>
</dbReference>
<dbReference type="Pfam" id="PF15721">
    <property type="entry name" value="ANXA2R"/>
    <property type="match status" value="1"/>
</dbReference>
<feature type="chain" id="PRO_0000295727" description="Annexin-2 receptor">
    <location>
        <begin position="1"/>
        <end position="193"/>
    </location>
</feature>
<feature type="region of interest" description="Disordered" evidence="1">
    <location>
        <begin position="78"/>
        <end position="111"/>
    </location>
</feature>
<feature type="compositionally biased region" description="Polar residues" evidence="1">
    <location>
        <begin position="78"/>
        <end position="87"/>
    </location>
</feature>
<feature type="sequence variant" id="VAR_033348" description="In dbSNP:rs1054428." evidence="2">
    <original>Q</original>
    <variation>R</variation>
    <location>
        <position position="119"/>
    </location>
</feature>
<feature type="sequence variant" id="VAR_033349" description="In dbSNP:rs10971.">
    <original>R</original>
    <variation>W</variation>
    <location>
        <position position="186"/>
    </location>
</feature>
<protein>
    <recommendedName>
        <fullName>Annexin-2 receptor</fullName>
    </recommendedName>
    <alternativeName>
        <fullName>Annexin II receptor</fullName>
        <shortName>AXIIR</shortName>
    </alternativeName>
</protein>
<accession>Q3ZCQ2</accession>
<accession>Q8NHX5</accession>
<gene>
    <name type="primary">ANXA2R</name>
    <name type="synonym">AX2R</name>
    <name type="synonym">C5orf39</name>
</gene>
<evidence type="ECO:0000256" key="1">
    <source>
        <dbReference type="SAM" id="MobiDB-lite"/>
    </source>
</evidence>
<evidence type="ECO:0000269" key="2">
    <source>
    </source>
</evidence>
<evidence type="ECO:0000269" key="3">
    <source>
    </source>
</evidence>
<evidence type="ECO:0000305" key="4"/>
<organism>
    <name type="scientific">Homo sapiens</name>
    <name type="common">Human</name>
    <dbReference type="NCBI Taxonomy" id="9606"/>
    <lineage>
        <taxon>Eukaryota</taxon>
        <taxon>Metazoa</taxon>
        <taxon>Chordata</taxon>
        <taxon>Craniata</taxon>
        <taxon>Vertebrata</taxon>
        <taxon>Euteleostomi</taxon>
        <taxon>Mammalia</taxon>
        <taxon>Eutheria</taxon>
        <taxon>Euarchontoglires</taxon>
        <taxon>Primates</taxon>
        <taxon>Haplorrhini</taxon>
        <taxon>Catarrhini</taxon>
        <taxon>Hominidae</taxon>
        <taxon>Homo</taxon>
    </lineage>
</organism>
<keyword id="KW-1267">Proteomics identification</keyword>
<keyword id="KW-0675">Receptor</keyword>
<keyword id="KW-1185">Reference proteome</keyword>
<reference key="1">
    <citation type="journal article" date="2006" name="J. Biol. Chem.">
        <title>Cloning and characterization of the annexin II receptor on human marrow stromal cells.</title>
        <authorList>
            <person name="Lu G."/>
            <person name="Maeda H."/>
            <person name="Reddy S.V."/>
            <person name="Kurihara N."/>
            <person name="Leach R."/>
            <person name="Anderson J.L."/>
            <person name="Roodman G.D."/>
        </authorList>
    </citation>
    <scope>NUCLEOTIDE SEQUENCE [MRNA]</scope>
    <scope>POSSIBLE FUNCTION</scope>
    <scope>TISSUE SPECIFICITY</scope>
    <source>
        <tissue>Bone marrow</tissue>
    </source>
</reference>
<reference key="2">
    <citation type="journal article" date="2004" name="Nature">
        <title>The DNA sequence and comparative analysis of human chromosome 5.</title>
        <authorList>
            <person name="Schmutz J."/>
            <person name="Martin J."/>
            <person name="Terry A."/>
            <person name="Couronne O."/>
            <person name="Grimwood J."/>
            <person name="Lowry S."/>
            <person name="Gordon L.A."/>
            <person name="Scott D."/>
            <person name="Xie G."/>
            <person name="Huang W."/>
            <person name="Hellsten U."/>
            <person name="Tran-Gyamfi M."/>
            <person name="She X."/>
            <person name="Prabhakar S."/>
            <person name="Aerts A."/>
            <person name="Altherr M."/>
            <person name="Bajorek E."/>
            <person name="Black S."/>
            <person name="Branscomb E."/>
            <person name="Caoile C."/>
            <person name="Challacombe J.F."/>
            <person name="Chan Y.M."/>
            <person name="Denys M."/>
            <person name="Detter J.C."/>
            <person name="Escobar J."/>
            <person name="Flowers D."/>
            <person name="Fotopulos D."/>
            <person name="Glavina T."/>
            <person name="Gomez M."/>
            <person name="Gonzales E."/>
            <person name="Goodstein D."/>
            <person name="Grigoriev I."/>
            <person name="Groza M."/>
            <person name="Hammon N."/>
            <person name="Hawkins T."/>
            <person name="Haydu L."/>
            <person name="Israni S."/>
            <person name="Jett J."/>
            <person name="Kadner K."/>
            <person name="Kimball H."/>
            <person name="Kobayashi A."/>
            <person name="Lopez F."/>
            <person name="Lou Y."/>
            <person name="Martinez D."/>
            <person name="Medina C."/>
            <person name="Morgan J."/>
            <person name="Nandkeshwar R."/>
            <person name="Noonan J.P."/>
            <person name="Pitluck S."/>
            <person name="Pollard M."/>
            <person name="Predki P."/>
            <person name="Priest J."/>
            <person name="Ramirez L."/>
            <person name="Retterer J."/>
            <person name="Rodriguez A."/>
            <person name="Rogers S."/>
            <person name="Salamov A."/>
            <person name="Salazar A."/>
            <person name="Thayer N."/>
            <person name="Tice H."/>
            <person name="Tsai M."/>
            <person name="Ustaszewska A."/>
            <person name="Vo N."/>
            <person name="Wheeler J."/>
            <person name="Wu K."/>
            <person name="Yang J."/>
            <person name="Dickson M."/>
            <person name="Cheng J.-F."/>
            <person name="Eichler E.E."/>
            <person name="Olsen A."/>
            <person name="Pennacchio L.A."/>
            <person name="Rokhsar D.S."/>
            <person name="Richardson P."/>
            <person name="Lucas S.M."/>
            <person name="Myers R.M."/>
            <person name="Rubin E.M."/>
        </authorList>
    </citation>
    <scope>NUCLEOTIDE SEQUENCE [LARGE SCALE GENOMIC DNA]</scope>
</reference>
<reference key="3">
    <citation type="journal article" date="2004" name="Genome Res.">
        <title>The status, quality, and expansion of the NIH full-length cDNA project: the Mammalian Gene Collection (MGC).</title>
        <authorList>
            <consortium name="The MGC Project Team"/>
        </authorList>
    </citation>
    <scope>NUCLEOTIDE SEQUENCE [LARGE SCALE MRNA]</scope>
    <scope>VARIANT ARG-119</scope>
    <source>
        <tissue>Placenta</tissue>
    </source>
</reference>
<reference key="4">
    <citation type="journal article" date="1999" name="J. Clin. Invest.">
        <title>Annexin II increases osteoclast formation by stimulating the proliferation of osteoclast precursors in human marrow cultures.</title>
        <authorList>
            <person name="Menaa C."/>
            <person name="Devlin R.D."/>
            <person name="Reddy S.V."/>
            <person name="Gazitt Y."/>
            <person name="Choi S.J."/>
            <person name="Roodman G.D."/>
        </authorList>
    </citation>
    <scope>IDENTIFICATION</scope>
</reference>
<reference key="5">
    <citation type="journal article" date="2015" name="Proteomics">
        <title>N-terminome analysis of the human mitochondrial proteome.</title>
        <authorList>
            <person name="Vaca Jacome A.S."/>
            <person name="Rabilloud T."/>
            <person name="Schaeffer-Reiss C."/>
            <person name="Rompais M."/>
            <person name="Ayoub D."/>
            <person name="Lane L."/>
            <person name="Bairoch A."/>
            <person name="Van Dorsselaer A."/>
            <person name="Carapito C."/>
        </authorList>
    </citation>
    <scope>IDENTIFICATION BY MASS SPECTROMETRY [LARGE SCALE ANALYSIS]</scope>
</reference>
<comment type="function">
    <text>May act as a receptor for annexin II on marrow stromal cells to induce osteoclast formation.</text>
</comment>
<comment type="interaction">
    <interactant intactId="EBI-21258284">
        <id>Q3ZCQ2</id>
    </interactant>
    <interactant intactId="EBI-1222758">
        <id>A5YKK6</id>
        <label>CNOT1</label>
    </interactant>
    <organismsDiffer>false</organismsDiffer>
    <experiments>3</experiments>
</comment>
<comment type="tissue specificity">
    <text evidence="3">Widely expressed. Highly expressed in lymphocytes. Expressed in both resting CD4(+) and CD8(+) T-cells.</text>
</comment>
<comment type="caution">
    <text evidence="4">PubMed:16895901 reports that it is a type I membrane protein. However, no clear transmembrane region is detected by prediction methods, suggesting that its localization at the plasma membrane is unsure.</text>
</comment>
<proteinExistence type="evidence at protein level"/>
<sequence length="193" mass="21682">MEQHFLGCVKRAWDSAEVAPEPQPPPIVSSEDRGPWPLPLYPVLGEYSLDSCDLGLLSSPCWRLPGVYWQNGLSPGVQSTLEPSTAKPTEFSWPGTQKQQEAPVEEVGQAEEPDRLRLQQLPWSSPLHPWDRQQDTEVCDSGCLLERRHPPALQPWRHLPGFSDCLEWILRVGFAAFSVLWACCSRICGAKQP</sequence>
<name>AX2R_HUMAN</name>